<sequence>MLNWQVIVQLVFLALIITTGPVIIVYLSTRERNLL</sequence>
<accession>Q9TLX0</accession>
<feature type="chain" id="PRO_0000059018" description="Photosystem II reaction center protein Psb30">
    <location>
        <begin position="1"/>
        <end position="35"/>
    </location>
</feature>
<feature type="transmembrane region" description="Helical" evidence="1">
    <location>
        <begin position="6"/>
        <end position="26"/>
    </location>
</feature>
<geneLocation type="chloroplast"/>
<evidence type="ECO:0000255" key="1">
    <source>
        <dbReference type="HAMAP-Rule" id="MF_01329"/>
    </source>
</evidence>
<evidence type="ECO:0000305" key="2"/>
<protein>
    <recommendedName>
        <fullName evidence="1">Photosystem II reaction center protein Psb30</fullName>
    </recommendedName>
    <alternativeName>
        <fullName evidence="1">Photosystem II reaction center protein Ycf12</fullName>
    </alternativeName>
</protein>
<proteinExistence type="evidence at protein level"/>
<reference key="1">
    <citation type="journal article" date="2000" name="J. Mol. Evol.">
        <title>The structure and gene repertoire of an ancient red algal plastid genome.</title>
        <authorList>
            <person name="Gloeckner G."/>
            <person name="Rosenthal A."/>
            <person name="Valentin K.-U."/>
        </authorList>
    </citation>
    <scope>NUCLEOTIDE SEQUENCE [LARGE SCALE GENOMIC DNA]</scope>
    <source>
        <strain>RK-1</strain>
    </source>
</reference>
<organism>
    <name type="scientific">Cyanidium caldarium</name>
    <name type="common">Red alga</name>
    <dbReference type="NCBI Taxonomy" id="2771"/>
    <lineage>
        <taxon>Eukaryota</taxon>
        <taxon>Rhodophyta</taxon>
        <taxon>Bangiophyceae</taxon>
        <taxon>Cyanidiales</taxon>
        <taxon>Cyanidiaceae</taxon>
        <taxon>Cyanidium</taxon>
    </lineage>
</organism>
<name>PSB30_CYACA</name>
<dbReference type="EMBL" id="AF022186">
    <property type="protein sequence ID" value="AAF12946.1"/>
    <property type="molecule type" value="Genomic_DNA"/>
</dbReference>
<dbReference type="RefSeq" id="NP_045148.1">
    <property type="nucleotide sequence ID" value="NC_001840.1"/>
</dbReference>
<dbReference type="PDB" id="4YUU">
    <property type="method" value="X-ray"/>
    <property type="resolution" value="2.77 A"/>
    <property type="chains" value="Y1/Y2/y1/y2=1-35"/>
</dbReference>
<dbReference type="PDBsum" id="4YUU"/>
<dbReference type="SMR" id="Q9TLX0"/>
<dbReference type="GeneID" id="800244"/>
<dbReference type="GO" id="GO:0009535">
    <property type="term" value="C:chloroplast thylakoid membrane"/>
    <property type="evidence" value="ECO:0007669"/>
    <property type="project" value="UniProtKB-SubCell"/>
</dbReference>
<dbReference type="GO" id="GO:0009523">
    <property type="term" value="C:photosystem II"/>
    <property type="evidence" value="ECO:0007669"/>
    <property type="project" value="UniProtKB-KW"/>
</dbReference>
<dbReference type="GO" id="GO:0015979">
    <property type="term" value="P:photosynthesis"/>
    <property type="evidence" value="ECO:0007669"/>
    <property type="project" value="UniProtKB-KW"/>
</dbReference>
<dbReference type="HAMAP" id="MF_01329">
    <property type="entry name" value="PSII_Psb30_Ycf12"/>
    <property type="match status" value="1"/>
</dbReference>
<dbReference type="InterPro" id="IPR010284">
    <property type="entry name" value="PSII_Ycf12_core-subunit"/>
</dbReference>
<dbReference type="NCBIfam" id="NF010239">
    <property type="entry name" value="PRK13686.1"/>
    <property type="match status" value="1"/>
</dbReference>
<dbReference type="Pfam" id="PF05969">
    <property type="entry name" value="PSII_Ycf12"/>
    <property type="match status" value="1"/>
</dbReference>
<gene>
    <name evidence="1" type="primary">psb30</name>
    <name evidence="1" type="synonym">ycf12</name>
    <name type="synonym">ycf34</name>
</gene>
<keyword id="KW-0002">3D-structure</keyword>
<keyword id="KW-0150">Chloroplast</keyword>
<keyword id="KW-0472">Membrane</keyword>
<keyword id="KW-0602">Photosynthesis</keyword>
<keyword id="KW-0604">Photosystem II</keyword>
<keyword id="KW-0934">Plastid</keyword>
<keyword id="KW-0793">Thylakoid</keyword>
<keyword id="KW-0812">Transmembrane</keyword>
<keyword id="KW-1133">Transmembrane helix</keyword>
<comment type="function">
    <text evidence="1">A core subunit of photosystem II (PSII), probably helps stabilize the reaction center.</text>
</comment>
<comment type="subunit">
    <text evidence="2">PSII is composed of 1 copy each of membrane proteins PsbA, PsbB, PsbC, PsbD, PsbE, PsbF, PsbH, PsbI, PsbJ, PsbK, PsbL, PsbM, PsbT, PsbY, PsbZ, Psb30/Ycf12, peripheral proteins of the oxygen-evolving complex and a large number of cofactors. It forms dimeric complexes.</text>
</comment>
<comment type="subcellular location">
    <subcellularLocation>
        <location evidence="1">Plastid</location>
        <location evidence="1">Chloroplast thylakoid membrane</location>
        <topology evidence="1">Single-pass membrane protein</topology>
    </subcellularLocation>
</comment>
<comment type="similarity">
    <text evidence="1">Belongs to the Psb30/Ycf12 family.</text>
</comment>